<proteinExistence type="inferred from homology"/>
<reference key="1">
    <citation type="journal article" date="2002" name="Genome Res.">
        <title>The genome of Methanosarcina acetivorans reveals extensive metabolic and physiological diversity.</title>
        <authorList>
            <person name="Galagan J.E."/>
            <person name="Nusbaum C."/>
            <person name="Roy A."/>
            <person name="Endrizzi M.G."/>
            <person name="Macdonald P."/>
            <person name="FitzHugh W."/>
            <person name="Calvo S."/>
            <person name="Engels R."/>
            <person name="Smirnov S."/>
            <person name="Atnoor D."/>
            <person name="Brown A."/>
            <person name="Allen N."/>
            <person name="Naylor J."/>
            <person name="Stange-Thomann N."/>
            <person name="DeArellano K."/>
            <person name="Johnson R."/>
            <person name="Linton L."/>
            <person name="McEwan P."/>
            <person name="McKernan K."/>
            <person name="Talamas J."/>
            <person name="Tirrell A."/>
            <person name="Ye W."/>
            <person name="Zimmer A."/>
            <person name="Barber R.D."/>
            <person name="Cann I."/>
            <person name="Graham D.E."/>
            <person name="Grahame D.A."/>
            <person name="Guss A.M."/>
            <person name="Hedderich R."/>
            <person name="Ingram-Smith C."/>
            <person name="Kuettner H.C."/>
            <person name="Krzycki J.A."/>
            <person name="Leigh J.A."/>
            <person name="Li W."/>
            <person name="Liu J."/>
            <person name="Mukhopadhyay B."/>
            <person name="Reeve J.N."/>
            <person name="Smith K."/>
            <person name="Springer T.A."/>
            <person name="Umayam L.A."/>
            <person name="White O."/>
            <person name="White R.H."/>
            <person name="de Macario E.C."/>
            <person name="Ferry J.G."/>
            <person name="Jarrell K.F."/>
            <person name="Jing H."/>
            <person name="Macario A.J.L."/>
            <person name="Paulsen I.T."/>
            <person name="Pritchett M."/>
            <person name="Sowers K.R."/>
            <person name="Swanson R.V."/>
            <person name="Zinder S.H."/>
            <person name="Lander E."/>
            <person name="Metcalf W.W."/>
            <person name="Birren B."/>
        </authorList>
    </citation>
    <scope>NUCLEOTIDE SEQUENCE [LARGE SCALE GENOMIC DNA]</scope>
    <source>
        <strain>ATCC 35395 / DSM 2834 / JCM 12185 / C2A</strain>
    </source>
</reference>
<evidence type="ECO:0000255" key="1">
    <source>
        <dbReference type="HAMAP-Rule" id="MF_01038"/>
    </source>
</evidence>
<dbReference type="EC" id="5.4.2.12" evidence="1"/>
<dbReference type="EMBL" id="AE010299">
    <property type="protein sequence ID" value="AAM07357.1"/>
    <property type="molecule type" value="Genomic_DNA"/>
</dbReference>
<dbReference type="SMR" id="Q8TIY2"/>
<dbReference type="STRING" id="188937.MA_4007"/>
<dbReference type="EnsemblBacteria" id="AAM07357">
    <property type="protein sequence ID" value="AAM07357"/>
    <property type="gene ID" value="MA_4007"/>
</dbReference>
<dbReference type="KEGG" id="mac:MA_4007"/>
<dbReference type="HOGENOM" id="CLU_026099_2_0_2"/>
<dbReference type="InParanoid" id="Q8TIY2"/>
<dbReference type="PhylomeDB" id="Q8TIY2"/>
<dbReference type="UniPathway" id="UPA00109">
    <property type="reaction ID" value="UER00186"/>
</dbReference>
<dbReference type="Proteomes" id="UP000002487">
    <property type="component" value="Chromosome"/>
</dbReference>
<dbReference type="GO" id="GO:0005737">
    <property type="term" value="C:cytoplasm"/>
    <property type="evidence" value="ECO:0007669"/>
    <property type="project" value="InterPro"/>
</dbReference>
<dbReference type="GO" id="GO:0030145">
    <property type="term" value="F:manganese ion binding"/>
    <property type="evidence" value="ECO:0000318"/>
    <property type="project" value="GO_Central"/>
</dbReference>
<dbReference type="GO" id="GO:0004619">
    <property type="term" value="F:phosphoglycerate mutase activity"/>
    <property type="evidence" value="ECO:0000318"/>
    <property type="project" value="GO_Central"/>
</dbReference>
<dbReference type="GO" id="GO:0005975">
    <property type="term" value="P:carbohydrate metabolic process"/>
    <property type="evidence" value="ECO:0000318"/>
    <property type="project" value="GO_Central"/>
</dbReference>
<dbReference type="GO" id="GO:0006007">
    <property type="term" value="P:glucose catabolic process"/>
    <property type="evidence" value="ECO:0007669"/>
    <property type="project" value="InterPro"/>
</dbReference>
<dbReference type="GO" id="GO:0006096">
    <property type="term" value="P:glycolytic process"/>
    <property type="evidence" value="ECO:0007669"/>
    <property type="project" value="UniProtKB-UniRule"/>
</dbReference>
<dbReference type="CDD" id="cd16010">
    <property type="entry name" value="iPGM"/>
    <property type="match status" value="1"/>
</dbReference>
<dbReference type="FunFam" id="3.40.1450.10:FF:000001">
    <property type="entry name" value="2,3-bisphosphoglycerate-independent phosphoglycerate mutase"/>
    <property type="match status" value="1"/>
</dbReference>
<dbReference type="FunFam" id="3.40.720.10:FF:000001">
    <property type="entry name" value="2,3-bisphosphoglycerate-independent phosphoglycerate mutase"/>
    <property type="match status" value="1"/>
</dbReference>
<dbReference type="Gene3D" id="3.40.720.10">
    <property type="entry name" value="Alkaline Phosphatase, subunit A"/>
    <property type="match status" value="1"/>
</dbReference>
<dbReference type="Gene3D" id="3.40.1450.10">
    <property type="entry name" value="BPG-independent phosphoglycerate mutase, domain B"/>
    <property type="match status" value="1"/>
</dbReference>
<dbReference type="HAMAP" id="MF_01038">
    <property type="entry name" value="GpmI"/>
    <property type="match status" value="1"/>
</dbReference>
<dbReference type="InterPro" id="IPR017850">
    <property type="entry name" value="Alkaline_phosphatase_core_sf"/>
</dbReference>
<dbReference type="InterPro" id="IPR011258">
    <property type="entry name" value="BPG-indep_PGM_N"/>
</dbReference>
<dbReference type="InterPro" id="IPR006124">
    <property type="entry name" value="Metalloenzyme"/>
</dbReference>
<dbReference type="InterPro" id="IPR036646">
    <property type="entry name" value="PGAM_B_sf"/>
</dbReference>
<dbReference type="InterPro" id="IPR005995">
    <property type="entry name" value="Pgm_bpd_ind"/>
</dbReference>
<dbReference type="NCBIfam" id="TIGR01307">
    <property type="entry name" value="pgm_bpd_ind"/>
    <property type="match status" value="1"/>
</dbReference>
<dbReference type="PANTHER" id="PTHR31637">
    <property type="entry name" value="2,3-BISPHOSPHOGLYCERATE-INDEPENDENT PHOSPHOGLYCERATE MUTASE"/>
    <property type="match status" value="1"/>
</dbReference>
<dbReference type="PANTHER" id="PTHR31637:SF0">
    <property type="entry name" value="2,3-BISPHOSPHOGLYCERATE-INDEPENDENT PHOSPHOGLYCERATE MUTASE"/>
    <property type="match status" value="1"/>
</dbReference>
<dbReference type="Pfam" id="PF06415">
    <property type="entry name" value="iPGM_N"/>
    <property type="match status" value="1"/>
</dbReference>
<dbReference type="Pfam" id="PF01676">
    <property type="entry name" value="Metalloenzyme"/>
    <property type="match status" value="1"/>
</dbReference>
<dbReference type="PIRSF" id="PIRSF001492">
    <property type="entry name" value="IPGAM"/>
    <property type="match status" value="1"/>
</dbReference>
<dbReference type="SUPFAM" id="SSF64158">
    <property type="entry name" value="2,3-Bisphosphoglycerate-independent phosphoglycerate mutase, substrate-binding domain"/>
    <property type="match status" value="1"/>
</dbReference>
<dbReference type="SUPFAM" id="SSF53649">
    <property type="entry name" value="Alkaline phosphatase-like"/>
    <property type="match status" value="1"/>
</dbReference>
<sequence>MWNSLHMTQARRPLMLMILDGWGYREASEGNAILAAETPNLNSLLNEFPWCFLECSGEAVGLPEGQMGNSEVGHLNIGAGRVVYQDLTRINLSVRNGDFFENPVLLDAISNVKLNDSSLHLMGLVSYGGVHSYMTHLYALIKLARDKGLKKVYIHAFLDGRDVPPKAALADIRELDAFCKENGSARIATVQGRYYAMDRDKRWERSKLAYDALTLGVAPYTTSDAETAVSDAYARGETDEFVKPTVVTGSDGKPEAVVQDNDSIIFFNFRPDRARQLTWAFENDDFDGFPREKRPKVHYVCMAQYDETLDLPIAFPPEELENVLGEVLSKQGLVQLRIAETEKYAHVTFFLNGGQEKCYDGEDRCLIPSPKVATYDLKPEMSAYEVTDEVIRRIQSGKYDVIVLNFANMDMVGHTGIFEAAVQAVEAVDTCVGRIIEALKKAGGVALITADHGNAEQMENQHTGEPHTAHTSNPVRCIYAGKGEVKALENGKLSDLAPTLLDLLGVPKPEEMKGKSLILNE</sequence>
<feature type="chain" id="PRO_0000212239" description="2,3-bisphosphoglycerate-independent phosphoglycerate mutase 2">
    <location>
        <begin position="1"/>
        <end position="521"/>
    </location>
</feature>
<feature type="active site" description="Phosphoserine intermediate" evidence="1">
    <location>
        <position position="70"/>
    </location>
</feature>
<feature type="binding site" evidence="1">
    <location>
        <position position="20"/>
    </location>
    <ligand>
        <name>Mn(2+)</name>
        <dbReference type="ChEBI" id="CHEBI:29035"/>
        <label>2</label>
    </ligand>
</feature>
<feature type="binding site" evidence="1">
    <location>
        <position position="70"/>
    </location>
    <ligand>
        <name>Mn(2+)</name>
        <dbReference type="ChEBI" id="CHEBI:29035"/>
        <label>2</label>
    </ligand>
</feature>
<feature type="binding site" evidence="1">
    <location>
        <position position="131"/>
    </location>
    <ligand>
        <name>substrate</name>
    </ligand>
</feature>
<feature type="binding site" evidence="1">
    <location>
        <begin position="161"/>
        <end position="162"/>
    </location>
    <ligand>
        <name>substrate</name>
    </ligand>
</feature>
<feature type="binding site" evidence="1">
    <location>
        <position position="193"/>
    </location>
    <ligand>
        <name>substrate</name>
    </ligand>
</feature>
<feature type="binding site" evidence="1">
    <location>
        <position position="199"/>
    </location>
    <ligand>
        <name>substrate</name>
    </ligand>
</feature>
<feature type="binding site" evidence="1">
    <location>
        <begin position="270"/>
        <end position="273"/>
    </location>
    <ligand>
        <name>substrate</name>
    </ligand>
</feature>
<feature type="binding site" evidence="1">
    <location>
        <position position="343"/>
    </location>
    <ligand>
        <name>substrate</name>
    </ligand>
</feature>
<feature type="binding site" evidence="1">
    <location>
        <position position="410"/>
    </location>
    <ligand>
        <name>Mn(2+)</name>
        <dbReference type="ChEBI" id="CHEBI:29035"/>
        <label>1</label>
    </ligand>
</feature>
<feature type="binding site" evidence="1">
    <location>
        <position position="414"/>
    </location>
    <ligand>
        <name>Mn(2+)</name>
        <dbReference type="ChEBI" id="CHEBI:29035"/>
        <label>1</label>
    </ligand>
</feature>
<feature type="binding site" evidence="1">
    <location>
        <position position="451"/>
    </location>
    <ligand>
        <name>Mn(2+)</name>
        <dbReference type="ChEBI" id="CHEBI:29035"/>
        <label>2</label>
    </ligand>
</feature>
<feature type="binding site" evidence="1">
    <location>
        <position position="452"/>
    </location>
    <ligand>
        <name>Mn(2+)</name>
        <dbReference type="ChEBI" id="CHEBI:29035"/>
        <label>2</label>
    </ligand>
</feature>
<feature type="binding site" evidence="1">
    <location>
        <position position="470"/>
    </location>
    <ligand>
        <name>Mn(2+)</name>
        <dbReference type="ChEBI" id="CHEBI:29035"/>
        <label>1</label>
    </ligand>
</feature>
<organism>
    <name type="scientific">Methanosarcina acetivorans (strain ATCC 35395 / DSM 2834 / JCM 12185 / C2A)</name>
    <dbReference type="NCBI Taxonomy" id="188937"/>
    <lineage>
        <taxon>Archaea</taxon>
        <taxon>Methanobacteriati</taxon>
        <taxon>Methanobacteriota</taxon>
        <taxon>Stenosarchaea group</taxon>
        <taxon>Methanomicrobia</taxon>
        <taxon>Methanosarcinales</taxon>
        <taxon>Methanosarcinaceae</taxon>
        <taxon>Methanosarcina</taxon>
    </lineage>
</organism>
<accession>Q8TIY2</accession>
<gene>
    <name evidence="1" type="primary">gpmI2</name>
    <name type="ordered locus">MA_4007</name>
</gene>
<comment type="function">
    <text evidence="1">Catalyzes the interconversion of 2-phosphoglycerate and 3-phosphoglycerate.</text>
</comment>
<comment type="catalytic activity">
    <reaction evidence="1">
        <text>(2R)-2-phosphoglycerate = (2R)-3-phosphoglycerate</text>
        <dbReference type="Rhea" id="RHEA:15901"/>
        <dbReference type="ChEBI" id="CHEBI:58272"/>
        <dbReference type="ChEBI" id="CHEBI:58289"/>
        <dbReference type="EC" id="5.4.2.12"/>
    </reaction>
</comment>
<comment type="cofactor">
    <cofactor evidence="1">
        <name>Mn(2+)</name>
        <dbReference type="ChEBI" id="CHEBI:29035"/>
    </cofactor>
    <text evidence="1">Binds 2 manganese ions per subunit.</text>
</comment>
<comment type="pathway">
    <text evidence="1">Carbohydrate degradation; glycolysis; pyruvate from D-glyceraldehyde 3-phosphate: step 3/5.</text>
</comment>
<comment type="similarity">
    <text evidence="1">Belongs to the BPG-independent phosphoglycerate mutase family.</text>
</comment>
<protein>
    <recommendedName>
        <fullName evidence="1">2,3-bisphosphoglycerate-independent phosphoglycerate mutase 2</fullName>
        <shortName evidence="1">BPG-independent PGAM 2</shortName>
        <shortName evidence="1">Phosphoglyceromutase 2</shortName>
        <shortName evidence="1">iPGM 2</shortName>
        <ecNumber evidence="1">5.4.2.12</ecNumber>
    </recommendedName>
</protein>
<keyword id="KW-0324">Glycolysis</keyword>
<keyword id="KW-0413">Isomerase</keyword>
<keyword id="KW-0464">Manganese</keyword>
<keyword id="KW-0479">Metal-binding</keyword>
<keyword id="KW-1185">Reference proteome</keyword>
<name>GPMI2_METAC</name>